<organism>
    <name type="scientific">Arabidopsis thaliana</name>
    <name type="common">Mouse-ear cress</name>
    <dbReference type="NCBI Taxonomy" id="3702"/>
    <lineage>
        <taxon>Eukaryota</taxon>
        <taxon>Viridiplantae</taxon>
        <taxon>Streptophyta</taxon>
        <taxon>Embryophyta</taxon>
        <taxon>Tracheophyta</taxon>
        <taxon>Spermatophyta</taxon>
        <taxon>Magnoliopsida</taxon>
        <taxon>eudicotyledons</taxon>
        <taxon>Gunneridae</taxon>
        <taxon>Pentapetalae</taxon>
        <taxon>rosids</taxon>
        <taxon>malvids</taxon>
        <taxon>Brassicales</taxon>
        <taxon>Brassicaceae</taxon>
        <taxon>Camelineae</taxon>
        <taxon>Arabidopsis</taxon>
    </lineage>
</organism>
<proteinExistence type="evidence at protein level"/>
<evidence type="ECO:0000250" key="1">
    <source>
        <dbReference type="UniProtKB" id="O80397"/>
    </source>
</evidence>
<evidence type="ECO:0000250" key="2">
    <source>
        <dbReference type="UniProtKB" id="Q9S7U9"/>
    </source>
</evidence>
<evidence type="ECO:0000255" key="3">
    <source>
        <dbReference type="PROSITE-ProRule" id="PRU00137"/>
    </source>
</evidence>
<evidence type="ECO:0000255" key="4">
    <source>
        <dbReference type="PROSITE-ProRule" id="PRU00159"/>
    </source>
</evidence>
<evidence type="ECO:0000255" key="5">
    <source>
        <dbReference type="PROSITE-ProRule" id="PRU10027"/>
    </source>
</evidence>
<evidence type="ECO:0000269" key="6">
    <source>
    </source>
</evidence>
<evidence type="ECO:0000269" key="7">
    <source>
    </source>
</evidence>
<evidence type="ECO:0000269" key="8">
    <source>
    </source>
</evidence>
<evidence type="ECO:0000269" key="9">
    <source>
    </source>
</evidence>
<evidence type="ECO:0000269" key="10">
    <source>
    </source>
</evidence>
<evidence type="ECO:0000269" key="11">
    <source>
    </source>
</evidence>
<evidence type="ECO:0000269" key="12">
    <source>
    </source>
</evidence>
<evidence type="ECO:0000269" key="13">
    <source>
    </source>
</evidence>
<evidence type="ECO:0000269" key="14">
    <source>
    </source>
</evidence>
<evidence type="ECO:0000269" key="15">
    <source>
    </source>
</evidence>
<evidence type="ECO:0000303" key="16">
    <source>
    </source>
</evidence>
<evidence type="ECO:0000303" key="17">
    <source>
    </source>
</evidence>
<evidence type="ECO:0000305" key="18"/>
<evidence type="ECO:0000305" key="19">
    <source>
    </source>
</evidence>
<evidence type="ECO:0000305" key="20">
    <source>
    </source>
</evidence>
<evidence type="ECO:0000305" key="21">
    <source>
    </source>
</evidence>
<evidence type="ECO:0000312" key="22">
    <source>
        <dbReference type="Araport" id="AT5G40440"/>
    </source>
</evidence>
<evidence type="ECO:0000312" key="23">
    <source>
        <dbReference type="EMBL" id="BAB11601.1"/>
    </source>
</evidence>
<name>M2K3_ARATH</name>
<gene>
    <name evidence="16 17" type="primary">MKK3</name>
    <name evidence="22" type="ordered locus">At5g40440</name>
    <name evidence="23" type="ORF">MPO12.19</name>
    <name evidence="23" type="ORF">MPO12_150</name>
</gene>
<dbReference type="EC" id="2.7.12.2"/>
<dbReference type="EMBL" id="AB015314">
    <property type="protein sequence ID" value="BAA28829.1"/>
    <property type="molecule type" value="mRNA"/>
</dbReference>
<dbReference type="EMBL" id="AB006702">
    <property type="protein sequence ID" value="BAB11601.1"/>
    <property type="molecule type" value="Genomic_DNA"/>
</dbReference>
<dbReference type="EMBL" id="CP002688">
    <property type="protein sequence ID" value="AED94548.1"/>
    <property type="molecule type" value="Genomic_DNA"/>
</dbReference>
<dbReference type="EMBL" id="CP002688">
    <property type="protein sequence ID" value="ANM70658.1"/>
    <property type="molecule type" value="Genomic_DNA"/>
</dbReference>
<dbReference type="EMBL" id="AK117136">
    <property type="protein sequence ID" value="BAC41814.1"/>
    <property type="molecule type" value="mRNA"/>
</dbReference>
<dbReference type="EMBL" id="BT006481">
    <property type="protein sequence ID" value="AAP21289.1"/>
    <property type="molecule type" value="mRNA"/>
</dbReference>
<dbReference type="PIR" id="T51338">
    <property type="entry name" value="T51338"/>
</dbReference>
<dbReference type="RefSeq" id="NP_001318713.1">
    <property type="nucleotide sequence ID" value="NM_001344328.1"/>
</dbReference>
<dbReference type="RefSeq" id="NP_198860.1">
    <property type="nucleotide sequence ID" value="NM_123408.3"/>
</dbReference>
<dbReference type="SMR" id="O80396"/>
<dbReference type="BioGRID" id="19293">
    <property type="interactions" value="8"/>
</dbReference>
<dbReference type="FunCoup" id="O80396">
    <property type="interactions" value="1757"/>
</dbReference>
<dbReference type="IntAct" id="O80396">
    <property type="interactions" value="6"/>
</dbReference>
<dbReference type="STRING" id="3702.O80396"/>
<dbReference type="GlyGen" id="O80396">
    <property type="glycosylation" value="1 site"/>
</dbReference>
<dbReference type="iPTMnet" id="O80396"/>
<dbReference type="PaxDb" id="3702-AT5G40440.1"/>
<dbReference type="ProteomicsDB" id="238546"/>
<dbReference type="EnsemblPlants" id="AT5G40440.1">
    <property type="protein sequence ID" value="AT5G40440.1"/>
    <property type="gene ID" value="AT5G40440"/>
</dbReference>
<dbReference type="EnsemblPlants" id="AT5G40440.4">
    <property type="protein sequence ID" value="AT5G40440.4"/>
    <property type="gene ID" value="AT5G40440"/>
</dbReference>
<dbReference type="GeneID" id="834042"/>
<dbReference type="Gramene" id="AT5G40440.1">
    <property type="protein sequence ID" value="AT5G40440.1"/>
    <property type="gene ID" value="AT5G40440"/>
</dbReference>
<dbReference type="Gramene" id="AT5G40440.4">
    <property type="protein sequence ID" value="AT5G40440.4"/>
    <property type="gene ID" value="AT5G40440"/>
</dbReference>
<dbReference type="KEGG" id="ath:AT5G40440"/>
<dbReference type="Araport" id="AT5G40440"/>
<dbReference type="TAIR" id="AT5G40440">
    <property type="gene designation" value="MKK3"/>
</dbReference>
<dbReference type="eggNOG" id="KOG0581">
    <property type="taxonomic scope" value="Eukaryota"/>
</dbReference>
<dbReference type="HOGENOM" id="CLU_000288_63_23_1"/>
<dbReference type="InParanoid" id="O80396"/>
<dbReference type="PhylomeDB" id="O80396"/>
<dbReference type="BRENDA" id="2.7.12.2">
    <property type="organism ID" value="399"/>
</dbReference>
<dbReference type="PRO" id="PR:O80396"/>
<dbReference type="Proteomes" id="UP000006548">
    <property type="component" value="Chromosome 5"/>
</dbReference>
<dbReference type="ExpressionAtlas" id="O80396">
    <property type="expression patterns" value="baseline and differential"/>
</dbReference>
<dbReference type="GO" id="GO:0005737">
    <property type="term" value="C:cytoplasm"/>
    <property type="evidence" value="ECO:0000314"/>
    <property type="project" value="UniProtKB"/>
</dbReference>
<dbReference type="GO" id="GO:0005634">
    <property type="term" value="C:nucleus"/>
    <property type="evidence" value="ECO:0000314"/>
    <property type="project" value="TAIR"/>
</dbReference>
<dbReference type="GO" id="GO:0005524">
    <property type="term" value="F:ATP binding"/>
    <property type="evidence" value="ECO:0007669"/>
    <property type="project" value="UniProtKB-KW"/>
</dbReference>
<dbReference type="GO" id="GO:0004707">
    <property type="term" value="F:MAP kinase activity"/>
    <property type="evidence" value="ECO:0000314"/>
    <property type="project" value="TAIR"/>
</dbReference>
<dbReference type="GO" id="GO:0004708">
    <property type="term" value="F:MAP kinase kinase activity"/>
    <property type="evidence" value="ECO:0000314"/>
    <property type="project" value="TAIR"/>
</dbReference>
<dbReference type="GO" id="GO:0004672">
    <property type="term" value="F:protein kinase activity"/>
    <property type="evidence" value="ECO:0000314"/>
    <property type="project" value="TAIR"/>
</dbReference>
<dbReference type="GO" id="GO:0106310">
    <property type="term" value="F:protein serine kinase activity"/>
    <property type="evidence" value="ECO:0007669"/>
    <property type="project" value="RHEA"/>
</dbReference>
<dbReference type="GO" id="GO:0004713">
    <property type="term" value="F:protein tyrosine kinase activity"/>
    <property type="evidence" value="ECO:0007669"/>
    <property type="project" value="RHEA"/>
</dbReference>
<dbReference type="GO" id="GO:0009738">
    <property type="term" value="P:abscisic acid-activated signaling pathway"/>
    <property type="evidence" value="ECO:0000315"/>
    <property type="project" value="UniProtKB"/>
</dbReference>
<dbReference type="GO" id="GO:0098542">
    <property type="term" value="P:defense response to other organism"/>
    <property type="evidence" value="ECO:0000315"/>
    <property type="project" value="TAIR"/>
</dbReference>
<dbReference type="GO" id="GO:0009866">
    <property type="term" value="P:induced systemic resistance, ethylene mediated signaling pathway"/>
    <property type="evidence" value="ECO:0000270"/>
    <property type="project" value="TAIR"/>
</dbReference>
<dbReference type="GO" id="GO:0009864">
    <property type="term" value="P:induced systemic resistance, jasmonic acid mediated signaling pathway"/>
    <property type="evidence" value="ECO:0000270"/>
    <property type="project" value="TAIR"/>
</dbReference>
<dbReference type="GO" id="GO:0009737">
    <property type="term" value="P:response to abscisic acid"/>
    <property type="evidence" value="ECO:0000315"/>
    <property type="project" value="UniProtKB"/>
</dbReference>
<dbReference type="GO" id="GO:0080027">
    <property type="term" value="P:response to herbivore"/>
    <property type="evidence" value="ECO:0000315"/>
    <property type="project" value="TAIR"/>
</dbReference>
<dbReference type="GO" id="GO:0009611">
    <property type="term" value="P:response to wounding"/>
    <property type="evidence" value="ECO:0000315"/>
    <property type="project" value="TAIR"/>
</dbReference>
<dbReference type="CDD" id="cd00780">
    <property type="entry name" value="NTF2"/>
    <property type="match status" value="1"/>
</dbReference>
<dbReference type="CDD" id="cd06623">
    <property type="entry name" value="PKc_MAPKK_plant_like"/>
    <property type="match status" value="1"/>
</dbReference>
<dbReference type="FunFam" id="3.10.450.50:FF:000012">
    <property type="entry name" value="Mitogen-activated protein kinase kinase 3"/>
    <property type="match status" value="1"/>
</dbReference>
<dbReference type="FunFam" id="1.10.510.10:FF:000432">
    <property type="entry name" value="mitogen-activated protein kinase kinase 3"/>
    <property type="match status" value="1"/>
</dbReference>
<dbReference type="FunFam" id="3.30.200.20:FF:000527">
    <property type="entry name" value="mitogen-activated protein kinase kinase 3"/>
    <property type="match status" value="1"/>
</dbReference>
<dbReference type="Gene3D" id="3.10.450.50">
    <property type="match status" value="1"/>
</dbReference>
<dbReference type="Gene3D" id="3.30.200.20">
    <property type="entry name" value="Phosphorylase Kinase, domain 1"/>
    <property type="match status" value="1"/>
</dbReference>
<dbReference type="Gene3D" id="1.10.510.10">
    <property type="entry name" value="Transferase(Phosphotransferase) domain 1"/>
    <property type="match status" value="1"/>
</dbReference>
<dbReference type="InterPro" id="IPR011009">
    <property type="entry name" value="Kinase-like_dom_sf"/>
</dbReference>
<dbReference type="InterPro" id="IPR032710">
    <property type="entry name" value="NTF2-like_dom_sf"/>
</dbReference>
<dbReference type="InterPro" id="IPR018222">
    <property type="entry name" value="Nuclear_transport_factor_2_euk"/>
</dbReference>
<dbReference type="InterPro" id="IPR000719">
    <property type="entry name" value="Prot_kinase_dom"/>
</dbReference>
<dbReference type="InterPro" id="IPR017441">
    <property type="entry name" value="Protein_kinase_ATP_BS"/>
</dbReference>
<dbReference type="InterPro" id="IPR008271">
    <property type="entry name" value="Ser/Thr_kinase_AS"/>
</dbReference>
<dbReference type="PANTHER" id="PTHR48013:SF9">
    <property type="entry name" value="DUAL SPECIFICITY MITOGEN-ACTIVATED PROTEIN KINASE KINASE 5"/>
    <property type="match status" value="1"/>
</dbReference>
<dbReference type="PANTHER" id="PTHR48013">
    <property type="entry name" value="DUAL SPECIFICITY MITOGEN-ACTIVATED PROTEIN KINASE KINASE 5-RELATED"/>
    <property type="match status" value="1"/>
</dbReference>
<dbReference type="Pfam" id="PF00069">
    <property type="entry name" value="Pkinase"/>
    <property type="match status" value="1"/>
</dbReference>
<dbReference type="SMART" id="SM00220">
    <property type="entry name" value="S_TKc"/>
    <property type="match status" value="1"/>
</dbReference>
<dbReference type="SUPFAM" id="SSF54427">
    <property type="entry name" value="NTF2-like"/>
    <property type="match status" value="1"/>
</dbReference>
<dbReference type="SUPFAM" id="SSF56112">
    <property type="entry name" value="Protein kinase-like (PK-like)"/>
    <property type="match status" value="1"/>
</dbReference>
<dbReference type="PROSITE" id="PS50177">
    <property type="entry name" value="NTF2_DOMAIN"/>
    <property type="match status" value="1"/>
</dbReference>
<dbReference type="PROSITE" id="PS00107">
    <property type="entry name" value="PROTEIN_KINASE_ATP"/>
    <property type="match status" value="1"/>
</dbReference>
<dbReference type="PROSITE" id="PS50011">
    <property type="entry name" value="PROTEIN_KINASE_DOM"/>
    <property type="match status" value="1"/>
</dbReference>
<dbReference type="PROSITE" id="PS00108">
    <property type="entry name" value="PROTEIN_KINASE_ST"/>
    <property type="match status" value="1"/>
</dbReference>
<comment type="function">
    <text evidence="7 8 11 13 14">MKK3-MPK6 module plays an important role in the jasmonate signal transduction pathway through the negative regulation of MYC2/JIN1 expression. Activates by phosphorylation the downstream MPK6, MPK7 and MPK8. MKK3-MPK7 module acts as a positive regulator of PR1 gene expression. MKK3-MPK8 module negatively regulates ROS accumulation through controlling expression of the RBOHD gene. Component of the abscisic acid (ABA) signaling pathway that may act as ABA signal transducer in the context of abiotic stresses. Activator of the C group MAP kinases. Activates MPK7 in response to ABA (PubMed:25720833). Mitogen-activated protein kinase (MAPK) that is specifically regulated by MAPKKK20 and mediates signaling that regulates cortical microtubule functions (PubMed:28848569).</text>
</comment>
<comment type="catalytic activity">
    <reaction>
        <text>L-seryl-[protein] + ATP = O-phospho-L-seryl-[protein] + ADP + H(+)</text>
        <dbReference type="Rhea" id="RHEA:17989"/>
        <dbReference type="Rhea" id="RHEA-COMP:9863"/>
        <dbReference type="Rhea" id="RHEA-COMP:11604"/>
        <dbReference type="ChEBI" id="CHEBI:15378"/>
        <dbReference type="ChEBI" id="CHEBI:29999"/>
        <dbReference type="ChEBI" id="CHEBI:30616"/>
        <dbReference type="ChEBI" id="CHEBI:83421"/>
        <dbReference type="ChEBI" id="CHEBI:456216"/>
        <dbReference type="EC" id="2.7.12.2"/>
    </reaction>
</comment>
<comment type="catalytic activity">
    <reaction>
        <text>L-threonyl-[protein] + ATP = O-phospho-L-threonyl-[protein] + ADP + H(+)</text>
        <dbReference type="Rhea" id="RHEA:46608"/>
        <dbReference type="Rhea" id="RHEA-COMP:11060"/>
        <dbReference type="Rhea" id="RHEA-COMP:11605"/>
        <dbReference type="ChEBI" id="CHEBI:15378"/>
        <dbReference type="ChEBI" id="CHEBI:30013"/>
        <dbReference type="ChEBI" id="CHEBI:30616"/>
        <dbReference type="ChEBI" id="CHEBI:61977"/>
        <dbReference type="ChEBI" id="CHEBI:456216"/>
        <dbReference type="EC" id="2.7.12.2"/>
    </reaction>
</comment>
<comment type="catalytic activity">
    <reaction>
        <text>L-tyrosyl-[protein] + ATP = O-phospho-L-tyrosyl-[protein] + ADP + H(+)</text>
        <dbReference type="Rhea" id="RHEA:10596"/>
        <dbReference type="Rhea" id="RHEA-COMP:10136"/>
        <dbReference type="Rhea" id="RHEA-COMP:20101"/>
        <dbReference type="ChEBI" id="CHEBI:15378"/>
        <dbReference type="ChEBI" id="CHEBI:30616"/>
        <dbReference type="ChEBI" id="CHEBI:46858"/>
        <dbReference type="ChEBI" id="CHEBI:61978"/>
        <dbReference type="ChEBI" id="CHEBI:456216"/>
        <dbReference type="EC" id="2.7.12.2"/>
    </reaction>
</comment>
<comment type="subunit">
    <text evidence="8 9 10 12 13 14 15">Interacts with MPK1, MPK2 and MPK7 (PubMed:17933903, PubMed:19513235, PubMed:25680457). Interacts with P.syringae type III effector HopF2 (PubMed:20571112). Interacts with MPK14 (PubMed:19513235). Binds to MAPKKK17 and MAPKKK18 (PubMed:25680457, PubMed:25720833). Binds to MAPKKK20 (PubMed:28848569, PubMed:30081740).</text>
</comment>
<comment type="interaction">
    <interactant intactId="EBI-2358337">
        <id>O80396</id>
    </interactant>
    <interactant intactId="EBI-25520138">
        <id>A0A384KVW9</id>
        <label>At3g50800</label>
    </interactant>
    <organismsDiffer>false</organismsDiffer>
    <experiments>3</experiments>
</comment>
<comment type="interaction">
    <interactant intactId="EBI-2358337">
        <id>O80396</id>
    </interactant>
    <interactant intactId="EBI-1238932">
        <id>Q39021</id>
        <label>MPK1</label>
    </interactant>
    <organismsDiffer>false</organismsDiffer>
    <experiments>4</experiments>
</comment>
<comment type="subcellular location">
    <subcellularLocation>
        <location evidence="14">Nucleus</location>
    </subcellularLocation>
    <subcellularLocation>
        <location evidence="14 15">Cytoplasm</location>
    </subcellularLocation>
</comment>
<comment type="tissue specificity">
    <text evidence="6 11 14">Mostly expressed in leaves, and, to a lower extent, in roots, seedlings, flower buds, flowers and siliques.</text>
</comment>
<comment type="induction">
    <text evidence="8">By Pseudomonas syringae pv tomato strain DC3000 infection.</text>
</comment>
<comment type="PTM">
    <text evidence="14 19 20 21">Phosphorylation at Ser-235 and Thr-241 by MAP kinase kinase kinases positively regulates kinase activity (Probable). Phosphorylated by MAPKKK20 (PubMed:28848569).</text>
</comment>
<comment type="disruption phenotype">
    <text evidence="8 13 14">More sensitive to Pseudomonas syringae pv. tomato DC3000 infection (PubMed:17933903). Hypersensitivity to abscisic acid (ABA) in germination and root elongation (PubMed:25720833). Short roots with abnormal twisting (e.g. leftward skewing) in media containing microtubule-disrupting drugs (e.g. oryzalin) (PubMed:28848569).</text>
</comment>
<comment type="similarity">
    <text evidence="18">Belongs to the protein kinase superfamily. STE Ser/Thr protein kinase family. MAP kinase kinase subfamily.</text>
</comment>
<protein>
    <recommendedName>
        <fullName evidence="16 17">Mitogen-activated protein kinase kinase 3</fullName>
        <shortName evidence="16 17">AtMKK3</shortName>
        <shortName evidence="16 17">MAP kinase kinase 3</shortName>
        <ecNumber>2.7.12.2</ecNumber>
    </recommendedName>
</protein>
<reference key="1">
    <citation type="journal article" date="1998" name="DNA Res.">
        <title>Molecular cloning and characterization of three cDNAs encoding putative mitogen-activated protein kinase kinases (MAPKKs) in Arabidopsis thaliana.</title>
        <authorList>
            <person name="Ichimura K."/>
            <person name="Mizoguchi T."/>
            <person name="Hayashida N."/>
            <person name="Seki M."/>
            <person name="Shinozaki K."/>
        </authorList>
    </citation>
    <scope>NUCLEOTIDE SEQUENCE [MRNA]</scope>
    <scope>TISSUE SPECIFICITY</scope>
    <source>
        <strain>cv. Columbia</strain>
    </source>
</reference>
<reference key="2">
    <citation type="journal article" date="1997" name="DNA Res.">
        <title>Structural analysis of Arabidopsis thaliana chromosome 5. II. Sequence features of the regions of 1,044,062 bp covered by thirteen physically assigned P1 clones.</title>
        <authorList>
            <person name="Kotani H."/>
            <person name="Nakamura Y."/>
            <person name="Sato S."/>
            <person name="Kaneko T."/>
            <person name="Asamizu E."/>
            <person name="Miyajima N."/>
            <person name="Tabata S."/>
        </authorList>
    </citation>
    <scope>NUCLEOTIDE SEQUENCE [LARGE SCALE GENOMIC DNA]</scope>
    <source>
        <strain>cv. Columbia</strain>
    </source>
</reference>
<reference key="3">
    <citation type="journal article" date="2017" name="Plant J.">
        <title>Araport11: a complete reannotation of the Arabidopsis thaliana reference genome.</title>
        <authorList>
            <person name="Cheng C.Y."/>
            <person name="Krishnakumar V."/>
            <person name="Chan A.P."/>
            <person name="Thibaud-Nissen F."/>
            <person name="Schobel S."/>
            <person name="Town C.D."/>
        </authorList>
    </citation>
    <scope>GENOME REANNOTATION</scope>
    <source>
        <strain>cv. Columbia</strain>
    </source>
</reference>
<reference key="4">
    <citation type="journal article" date="2002" name="Science">
        <title>Functional annotation of a full-length Arabidopsis cDNA collection.</title>
        <authorList>
            <person name="Seki M."/>
            <person name="Narusaka M."/>
            <person name="Kamiya A."/>
            <person name="Ishida J."/>
            <person name="Satou M."/>
            <person name="Sakurai T."/>
            <person name="Nakajima M."/>
            <person name="Enju A."/>
            <person name="Akiyama K."/>
            <person name="Oono Y."/>
            <person name="Muramatsu M."/>
            <person name="Hayashizaki Y."/>
            <person name="Kawai J."/>
            <person name="Carninci P."/>
            <person name="Itoh M."/>
            <person name="Ishii Y."/>
            <person name="Arakawa T."/>
            <person name="Shibata K."/>
            <person name="Shinagawa A."/>
            <person name="Shinozaki K."/>
        </authorList>
    </citation>
    <scope>NUCLEOTIDE SEQUENCE [LARGE SCALE MRNA]</scope>
    <source>
        <strain>cv. Columbia</strain>
    </source>
</reference>
<reference key="5">
    <citation type="journal article" date="2003" name="Science">
        <title>Empirical analysis of transcriptional activity in the Arabidopsis genome.</title>
        <authorList>
            <person name="Yamada K."/>
            <person name="Lim J."/>
            <person name="Dale J.M."/>
            <person name="Chen H."/>
            <person name="Shinn P."/>
            <person name="Palm C.J."/>
            <person name="Southwick A.M."/>
            <person name="Wu H.C."/>
            <person name="Kim C.J."/>
            <person name="Nguyen M."/>
            <person name="Pham P.K."/>
            <person name="Cheuk R.F."/>
            <person name="Karlin-Newmann G."/>
            <person name="Liu S.X."/>
            <person name="Lam B."/>
            <person name="Sakano H."/>
            <person name="Wu T."/>
            <person name="Yu G."/>
            <person name="Miranda M."/>
            <person name="Quach H.L."/>
            <person name="Tripp M."/>
            <person name="Chang C.H."/>
            <person name="Lee J.M."/>
            <person name="Toriumi M.J."/>
            <person name="Chan M.M."/>
            <person name="Tang C.C."/>
            <person name="Onodera C.S."/>
            <person name="Deng J.M."/>
            <person name="Akiyama K."/>
            <person name="Ansari Y."/>
            <person name="Arakawa T."/>
            <person name="Banh J."/>
            <person name="Banno F."/>
            <person name="Bowser L."/>
            <person name="Brooks S.Y."/>
            <person name="Carninci P."/>
            <person name="Chao Q."/>
            <person name="Choy N."/>
            <person name="Enju A."/>
            <person name="Goldsmith A.D."/>
            <person name="Gurjal M."/>
            <person name="Hansen N.F."/>
            <person name="Hayashizaki Y."/>
            <person name="Johnson-Hopson C."/>
            <person name="Hsuan V.W."/>
            <person name="Iida K."/>
            <person name="Karnes M."/>
            <person name="Khan S."/>
            <person name="Koesema E."/>
            <person name="Ishida J."/>
            <person name="Jiang P.X."/>
            <person name="Jones T."/>
            <person name="Kawai J."/>
            <person name="Kamiya A."/>
            <person name="Meyers C."/>
            <person name="Nakajima M."/>
            <person name="Narusaka M."/>
            <person name="Seki M."/>
            <person name="Sakurai T."/>
            <person name="Satou M."/>
            <person name="Tamse R."/>
            <person name="Vaysberg M."/>
            <person name="Wallender E.K."/>
            <person name="Wong C."/>
            <person name="Yamamura Y."/>
            <person name="Yuan S."/>
            <person name="Shinozaki K."/>
            <person name="Davis R.W."/>
            <person name="Theologis A."/>
            <person name="Ecker J.R."/>
        </authorList>
    </citation>
    <scope>NUCLEOTIDE SEQUENCE [LARGE SCALE MRNA]</scope>
    <source>
        <strain>cv. Columbia</strain>
    </source>
</reference>
<reference key="6">
    <citation type="journal article" date="2002" name="Trends Plant Sci.">
        <title>Mitogen-activated protein kinase cascades in plants: a new nomenclature.</title>
        <authorList>
            <consortium name="MAPK group"/>
        </authorList>
    </citation>
    <scope>GENE FAMILY</scope>
    <scope>NOMENCLATURE</scope>
</reference>
<reference key="7">
    <citation type="journal article" date="2006" name="Trends Plant Sci.">
        <title>Ancient signals: comparative genomics of plant MAPK and MAPKK gene families.</title>
        <authorList>
            <person name="Hamel L.P."/>
            <person name="Nicole M.C."/>
            <person name="Sritubtim S."/>
            <person name="Morency M.J."/>
            <person name="Ellis M."/>
            <person name="Ehlting J."/>
            <person name="Beaudoin N."/>
            <person name="Barbazuk B."/>
            <person name="Klessig D."/>
            <person name="Lee J."/>
            <person name="Martin G."/>
            <person name="Mundy J."/>
            <person name="Ohashi Y."/>
            <person name="Scheel D."/>
            <person name="Sheen J."/>
            <person name="Xing T."/>
            <person name="Zhang S."/>
            <person name="Seguin A."/>
            <person name="Ellis B.E."/>
        </authorList>
    </citation>
    <scope>GENE FAMILY</scope>
</reference>
<reference key="8">
    <citation type="journal article" date="2007" name="Plant Cell">
        <title>The mitogen-activated protein kinase cascade MKK3-MPK6 is an important part of the jasmonate signal transduction pathway in Arabidopsis.</title>
        <authorList>
            <person name="Takahashi F."/>
            <person name="Yoshida R."/>
            <person name="Ichimura K."/>
            <person name="Mizoguchi T."/>
            <person name="Seo S."/>
            <person name="Yonezawa M."/>
            <person name="Maruyama K."/>
            <person name="Yamaguchi-Shinozaki K."/>
            <person name="Shinozaki K."/>
        </authorList>
    </citation>
    <scope>FUNCTION</scope>
    <scope>MUTAGENESIS OF SER-235 AND THR-241</scope>
    <scope>PHOSPHORYLATION AT SER-235 AND THR-241</scope>
</reference>
<reference key="9">
    <citation type="journal article" date="2007" name="Plant Cell">
        <title>The Arabidopsis mitogen-activated protein kinase kinase MKK3 is upstream of group C mitogen-activated protein kinases and participates in pathogen signaling.</title>
        <authorList>
            <person name="Doczi R."/>
            <person name="Brader G."/>
            <person name="Pettko-Szandtner A."/>
            <person name="Rajh I."/>
            <person name="Djamei A."/>
            <person name="Pitzschke A."/>
            <person name="Teige M."/>
            <person name="Hirt H."/>
        </authorList>
    </citation>
    <scope>DISRUPTION PHENOTYPE</scope>
    <scope>FUNCTION</scope>
    <scope>INDUCTION BY PATHOGEN</scope>
    <scope>MUTAGENESIS OF SER-235 AND THR-241</scope>
    <scope>INTERACTION WITH MPK1; MPK2 AND MPK7</scope>
    <scope>PHOSPHORYLATION AT SER-235 AND THR-241</scope>
</reference>
<reference key="10">
    <citation type="journal article" date="2008" name="Plant Signal. Behav.">
        <title>Comprehensive analysis of protein-protein interactions between Arabidopsis MAPKs and MAPK kinases helps define potential MAPK signalling modules.</title>
        <authorList>
            <person name="Lee J.S."/>
            <person name="Huh K.W."/>
            <person name="Bhargava A."/>
            <person name="Ellis B.E."/>
        </authorList>
    </citation>
    <scope>INTERACTION WITH MPK1; MPK2; MPK7 AND MPK14</scope>
</reference>
<reference key="11">
    <citation type="journal article" date="2010" name="Plant Cell">
        <title>A Pseudomonas syringae ADP-ribosyltransferase inhibits Arabidopsis mitogen-activated protein kinase kinases.</title>
        <authorList>
            <person name="Wang Y."/>
            <person name="Li J."/>
            <person name="Hou S."/>
            <person name="Wang X."/>
            <person name="Li Y."/>
            <person name="Ren D."/>
            <person name="Chen S."/>
            <person name="Tang X."/>
            <person name="Zhou J.M."/>
        </authorList>
    </citation>
    <scope>INTERACTION WITH HOPF2</scope>
</reference>
<reference key="12">
    <citation type="journal article" date="2011" name="Mol. Cell">
        <title>Calmodulin-dependent activation of MAP kinase for ROS homeostasis in Arabidopsis.</title>
        <authorList>
            <person name="Takahashi F."/>
            <person name="Mizoguchi T."/>
            <person name="Yoshida R."/>
            <person name="Ichimura K."/>
            <person name="Shinozaki K."/>
        </authorList>
    </citation>
    <scope>FUNCTION</scope>
    <scope>MUTAGENESIS OF SER-235 AND THR-241</scope>
    <scope>TISSUE SPECIFICITY</scope>
    <scope>PHOSPHORYLATION AT SER-235 AND THR-241</scope>
</reference>
<reference key="13">
    <citation type="journal article" date="2015" name="Plant J.">
        <title>Identification and characterization of an ABA-activated MAP kinase cascade in Arabidopsis thaliana.</title>
        <authorList>
            <person name="Danquah A."/>
            <person name="de Zelicourt A."/>
            <person name="Boudsocq M."/>
            <person name="Neubauer J."/>
            <person name="Frei Dit Frey N."/>
            <person name="Leonhardt N."/>
            <person name="Pateyron S."/>
            <person name="Gwinner F."/>
            <person name="Tamby J.P."/>
            <person name="Ortiz-Masia D."/>
            <person name="Marcote M.J."/>
            <person name="Hirt H."/>
            <person name="Colcombet J."/>
        </authorList>
    </citation>
    <scope>FUNCTION</scope>
    <scope>DISRUPTION PHENOTYPE</scope>
    <scope>INTERACTION WITH MAPKKK17 AND MAPKKK18</scope>
    <source>
        <strain>cv. Columbia</strain>
    </source>
</reference>
<reference key="14">
    <citation type="journal article" date="2015" name="Plant Mol. Biol.">
        <title>An abscisic acid inducible Arabidopsis MAPKKK, MAPKKK18 regulates leaf senescence via its kinase activity.</title>
        <authorList>
            <person name="Matsuoka D."/>
            <person name="Yasufuku T."/>
            <person name="Furuya T."/>
            <person name="Nanmori T."/>
        </authorList>
    </citation>
    <scope>INTERACTION WITH MAPKKK17; MPK1; MPK2 AND MPK7</scope>
    <source>
        <strain>cv. Columbia</strain>
    </source>
</reference>
<reference key="15">
    <citation type="journal article" date="2017" name="Front. Plant Sci.">
        <title>The Arabidopsis mitogen-activated protein kinase kinase kinase 20 (MKKK20) acts upstream of MKK3 and MPK18 in two separate signaling pathways involved in root microtubule functions.</title>
        <authorList>
            <person name="Benhamman R."/>
            <person name="Bai F."/>
            <person name="Drory S.B."/>
            <person name="Loubert-Hudon A."/>
            <person name="Ellis B."/>
            <person name="Matton D.P."/>
        </authorList>
    </citation>
    <scope>FUNCTION</scope>
    <scope>DISRUPTION PHENOTYPE</scope>
    <scope>TISSUE SPECIFICITY</scope>
    <scope>INTERACTION WITH MAPKKK20</scope>
    <scope>PHOSPHORYLATION</scope>
    <scope>SUBCELLULAR LOCATION</scope>
    <source>
        <strain>cv. Columbia</strain>
    </source>
</reference>
<reference key="16">
    <citation type="journal article" date="2018" name="Front. Plant Sci.">
        <title>Mitogen-activated protein kinase cascades in plant hormone signaling.</title>
        <authorList>
            <person name="Jagodzik P."/>
            <person name="Tajdel-Zielinska M."/>
            <person name="Ciesla A."/>
            <person name="Marczak M."/>
            <person name="Ludwikow A."/>
        </authorList>
    </citation>
    <scope>REVIEW ON MITOGEN-ACTIVATED PROTEIN KINASE CASCADES</scope>
</reference>
<reference key="17">
    <citation type="journal article" date="2018" name="Plant Signal. Behav.">
        <title>The Arabidopsis mitogen-activated protein kinase kinase kinase 20 (MKKK20) C-terminal domain interacts with MKK3 and harbors a typical DEF mammalian MAP kinase docking site.</title>
        <authorList>
            <person name="Bai F."/>
            <person name="Matton D.P."/>
        </authorList>
    </citation>
    <scope>INTERACTION WITH MAPKKK20</scope>
    <scope>SUBCELLULAR LOCATION</scope>
</reference>
<accession>O80396</accession>
<feature type="chain" id="PRO_0000428622" description="Mitogen-activated protein kinase kinase 3">
    <location>
        <begin position="1"/>
        <end position="520"/>
    </location>
</feature>
<feature type="domain" description="Protein kinase" evidence="4">
    <location>
        <begin position="83"/>
        <end position="339"/>
    </location>
</feature>
<feature type="domain" description="NTF2" evidence="3">
    <location>
        <begin position="366"/>
        <end position="516"/>
    </location>
</feature>
<feature type="active site" description="Proton acceptor" evidence="4 5">
    <location>
        <position position="207"/>
    </location>
</feature>
<feature type="binding site" evidence="4">
    <location>
        <begin position="89"/>
        <end position="97"/>
    </location>
    <ligand>
        <name>ATP</name>
        <dbReference type="ChEBI" id="CHEBI:30616"/>
    </ligand>
</feature>
<feature type="binding site" evidence="4">
    <location>
        <position position="112"/>
    </location>
    <ligand>
        <name>ATP</name>
        <dbReference type="ChEBI" id="CHEBI:30616"/>
    </ligand>
</feature>
<feature type="modified residue" description="Phosphoserine" evidence="2">
    <location>
        <position position="69"/>
    </location>
</feature>
<feature type="modified residue" description="Phosphoserine" evidence="19 20 21">
    <location>
        <position position="235"/>
    </location>
</feature>
<feature type="modified residue" description="Phosphothreonine" evidence="19 20 21">
    <location>
        <position position="241"/>
    </location>
</feature>
<feature type="modified residue" description="Phosphothreonine" evidence="1">
    <location>
        <position position="245"/>
    </location>
</feature>
<feature type="mutagenesis site" description="Constitutively active; when associated with D-241." evidence="7 8 11">
    <original>S</original>
    <variation>D</variation>
    <location>
        <position position="235"/>
    </location>
</feature>
<feature type="mutagenesis site" description="Constitutively active; when associated with E-241." evidence="7 8 11">
    <original>S</original>
    <variation>E</variation>
    <location>
        <position position="235"/>
    </location>
</feature>
<feature type="mutagenesis site" description="Constitutively active; when associated with D-235." evidence="7 8 11">
    <original>T</original>
    <variation>D</variation>
    <location>
        <position position="241"/>
    </location>
</feature>
<feature type="mutagenesis site" description="Constitutively active; when associated with E-235." evidence="7 8 11">
    <original>T</original>
    <variation>E</variation>
    <location>
        <position position="241"/>
    </location>
</feature>
<sequence>MAALEELKKKLSPLFDAEKGFSSSSSLDPNDSYLLSDGGTVNLLSRSYGVYNFNELGLQKCTSSHVDESESSETTYQCASHEMRVFGAIGSGASSVVQRAIHIPNHRILALKKINIFEREKRQQLLTEIRTLCEAPCHEGLVDFHGAFYSPDSGQISIALEYMNGGSLADILKVTKKIPEPVLSSLFHKLLQGLSYLHGVRHLVHRDIKPANLLINLKGEPKITDFGISAGLENSMAMCATFVGTVTYMSPERIRNDSYSYPADIWSLGLALFECGTGEFPYIANEGPVNLMLQILDDPSPTPPKQEFSPEFCSFIDACLQKDPDARPTADQLLSHPFITKHEKERVDLATFVQSIFDPTQRLKDLADMLTIHYYSLFDGFDDLWHHAKSLYTETSVFSFSGKHNTGSTEIFSALSDIRNTLTGDLPSEKLVHVVEKLHCKPCGSGGVIIRAVGSFIVGNQFLICGDGVQAEGLPSFKDLGFDVASRRVGRFQEQFVVESGDLIGKYFLAKQELYITNLD</sequence>
<keyword id="KW-0938">Abscisic acid signaling pathway</keyword>
<keyword id="KW-0067">ATP-binding</keyword>
<keyword id="KW-0963">Cytoplasm</keyword>
<keyword id="KW-0418">Kinase</keyword>
<keyword id="KW-0547">Nucleotide-binding</keyword>
<keyword id="KW-0539">Nucleus</keyword>
<keyword id="KW-0597">Phosphoprotein</keyword>
<keyword id="KW-0611">Plant defense</keyword>
<keyword id="KW-1185">Reference proteome</keyword>
<keyword id="KW-0723">Serine/threonine-protein kinase</keyword>
<keyword id="KW-0808">Transferase</keyword>